<comment type="function">
    <text evidence="1">Plays an essential role in nucleocapsid egress from the host nucleus to form the budded virion (BV). Does not participate in nucleocapsid formation.</text>
</comment>
<name>AC11_NPVAC</name>
<feature type="chain" id="PRO_0000132947" description="Protein AC11">
    <location>
        <begin position="1"/>
        <end position="340"/>
    </location>
</feature>
<keyword id="KW-1185">Reference proteome</keyword>
<dbReference type="EMBL" id="M75679">
    <property type="status" value="NOT_ANNOTATED_CDS"/>
    <property type="molecule type" value="Genomic_DNA"/>
</dbReference>
<dbReference type="EMBL" id="L22858">
    <property type="protein sequence ID" value="AAA66641.1"/>
    <property type="molecule type" value="Genomic_DNA"/>
</dbReference>
<dbReference type="PIR" id="C72851">
    <property type="entry name" value="C72851"/>
</dbReference>
<dbReference type="RefSeq" id="NP_054040.1">
    <property type="nucleotide sequence ID" value="NC_001623.1"/>
</dbReference>
<dbReference type="GeneID" id="1403843"/>
<dbReference type="KEGG" id="vg:1403843"/>
<dbReference type="OrthoDB" id="5383at10239"/>
<dbReference type="Proteomes" id="UP000008292">
    <property type="component" value="Segment"/>
</dbReference>
<dbReference type="InterPro" id="IPR009815">
    <property type="entry name" value="AcMNPV_AC11"/>
</dbReference>
<dbReference type="Pfam" id="PF07138">
    <property type="entry name" value="AcMNPV_AC11"/>
    <property type="match status" value="1"/>
</dbReference>
<reference key="1">
    <citation type="journal article" date="1991" name="Virology">
        <title>Nucleotide sequence of the Autographa californica nuclear polyhedrosis 9.4 kbp EcoRI-I and -R (polyhedrin gene) region.</title>
        <authorList>
            <person name="Possee R.D."/>
            <person name="Sun T.P."/>
            <person name="Howard S.C."/>
            <person name="Ayres M.D."/>
            <person name="Hill-Perkins M."/>
            <person name="Gearing K.L."/>
        </authorList>
    </citation>
    <scope>NUCLEOTIDE SEQUENCE [GENOMIC DNA]</scope>
    <source>
        <strain>C6</strain>
    </source>
</reference>
<reference key="2">
    <citation type="journal article" date="1994" name="Virology">
        <title>The complete DNA sequence of Autographa californica nuclear polyhedrosis virus.</title>
        <authorList>
            <person name="Ayres M.D."/>
            <person name="Howard S.C."/>
            <person name="Kuzio J."/>
            <person name="Lopez-Ferber M."/>
            <person name="Possee R.D."/>
        </authorList>
    </citation>
    <scope>NUCLEOTIDE SEQUENCE [LARGE SCALE GENOMIC DNA]</scope>
    <source>
        <strain>C6</strain>
    </source>
</reference>
<reference key="3">
    <citation type="journal article" date="2015" name="J. Virol.">
        <title>Autographa californica multiple nucleopolyhedrovirus ORF11 is essential for budded-virus production and occlusion-derived-virus envelopment.</title>
        <authorList>
            <person name="Tao X.Y."/>
            <person name="Choi J.Y."/>
            <person name="Kim W.J."/>
            <person name="An S.B."/>
            <person name="Liu Q."/>
            <person name="Kim S.E."/>
            <person name="Lee S.H."/>
            <person name="Kim J.H."/>
            <person name="Woo S.D."/>
            <person name="Jin B.R."/>
            <person name="Je Y.H."/>
        </authorList>
    </citation>
    <scope>FUNCTION</scope>
</reference>
<organism>
    <name type="scientific">Autographa californica nuclear polyhedrosis virus</name>
    <name type="common">AcMNPV</name>
    <dbReference type="NCBI Taxonomy" id="46015"/>
    <lineage>
        <taxon>Viruses</taxon>
        <taxon>Viruses incertae sedis</taxon>
        <taxon>Naldaviricetes</taxon>
        <taxon>Lefavirales</taxon>
        <taxon>Baculoviridae</taxon>
        <taxon>Alphabaculovirus</taxon>
        <taxon>Alphabaculovirus aucalifornicae</taxon>
    </lineage>
</organism>
<organismHost>
    <name type="scientific">Lepidoptera</name>
    <name type="common">butterflies and moths</name>
    <dbReference type="NCBI Taxonomy" id="7088"/>
</organismHost>
<protein>
    <recommendedName>
        <fullName>Protein AC11</fullName>
    </recommendedName>
</protein>
<evidence type="ECO:0000269" key="1">
    <source>
    </source>
</evidence>
<sequence>MSLAAKLIIYNYYAKYNEVHDVYGESYHHYRIVQEYLSESYVNGMSCIERDVTAMRRLKSGSCTFDEAVKMIDAGDSIKSLSHWFSTSETMGIDDNVREVLEQIDAVVPVSVRVQNGWQIFSLNNFEREISQDMLDCLQIILGRFEYFMRNGKLLRIANVFNPNNDVVGWWYNKFCVVTYVHRIMYRSVPAELVPRLSEAVKKFIRLRKSDYDDRLHVDESYNCPRVIAEMYGRFCGIGKEHFSKHKLSCMHILFQYLRGKTTQEEKSFPCYRVIKDFGRQCKDVYKNLKDVFDLLHAHSMSDKDKNSLMDLLCVMDCEEIDVDCFYYIFESFLNNKHLQ</sequence>
<accession>P41421</accession>
<proteinExistence type="predicted"/>